<proteinExistence type="inferred from homology"/>
<name>MURG_PROM3</name>
<dbReference type="EC" id="2.4.1.227" evidence="1"/>
<dbReference type="EMBL" id="CP000554">
    <property type="protein sequence ID" value="ABM79521.1"/>
    <property type="molecule type" value="Genomic_DNA"/>
</dbReference>
<dbReference type="RefSeq" id="WP_011827363.1">
    <property type="nucleotide sequence ID" value="NC_008820.1"/>
</dbReference>
<dbReference type="SMR" id="A2CDG1"/>
<dbReference type="STRING" id="59922.P9303_27911"/>
<dbReference type="CAZy" id="GT28">
    <property type="family name" value="Glycosyltransferase Family 28"/>
</dbReference>
<dbReference type="KEGG" id="pmf:P9303_27911"/>
<dbReference type="HOGENOM" id="CLU_037404_0_0_3"/>
<dbReference type="BioCyc" id="PMAR59922:G1G80-2449-MONOMER"/>
<dbReference type="UniPathway" id="UPA00219"/>
<dbReference type="Proteomes" id="UP000002274">
    <property type="component" value="Chromosome"/>
</dbReference>
<dbReference type="GO" id="GO:0005886">
    <property type="term" value="C:plasma membrane"/>
    <property type="evidence" value="ECO:0007669"/>
    <property type="project" value="UniProtKB-SubCell"/>
</dbReference>
<dbReference type="GO" id="GO:0051991">
    <property type="term" value="F:UDP-N-acetyl-D-glucosamine:N-acetylmuramoyl-L-alanyl-D-glutamyl-meso-2,6-diaminopimelyl-D-alanyl-D-alanine-diphosphoundecaprenol 4-beta-N-acetylglucosaminlytransferase activity"/>
    <property type="evidence" value="ECO:0007669"/>
    <property type="project" value="RHEA"/>
</dbReference>
<dbReference type="GO" id="GO:0050511">
    <property type="term" value="F:undecaprenyldiphospho-muramoylpentapeptide beta-N-acetylglucosaminyltransferase activity"/>
    <property type="evidence" value="ECO:0007669"/>
    <property type="project" value="UniProtKB-UniRule"/>
</dbReference>
<dbReference type="GO" id="GO:0005975">
    <property type="term" value="P:carbohydrate metabolic process"/>
    <property type="evidence" value="ECO:0007669"/>
    <property type="project" value="InterPro"/>
</dbReference>
<dbReference type="GO" id="GO:0051301">
    <property type="term" value="P:cell division"/>
    <property type="evidence" value="ECO:0007669"/>
    <property type="project" value="UniProtKB-KW"/>
</dbReference>
<dbReference type="GO" id="GO:0071555">
    <property type="term" value="P:cell wall organization"/>
    <property type="evidence" value="ECO:0007669"/>
    <property type="project" value="UniProtKB-KW"/>
</dbReference>
<dbReference type="GO" id="GO:0030259">
    <property type="term" value="P:lipid glycosylation"/>
    <property type="evidence" value="ECO:0007669"/>
    <property type="project" value="UniProtKB-UniRule"/>
</dbReference>
<dbReference type="GO" id="GO:0009252">
    <property type="term" value="P:peptidoglycan biosynthetic process"/>
    <property type="evidence" value="ECO:0007669"/>
    <property type="project" value="UniProtKB-UniRule"/>
</dbReference>
<dbReference type="GO" id="GO:0008360">
    <property type="term" value="P:regulation of cell shape"/>
    <property type="evidence" value="ECO:0007669"/>
    <property type="project" value="UniProtKB-KW"/>
</dbReference>
<dbReference type="CDD" id="cd03785">
    <property type="entry name" value="GT28_MurG"/>
    <property type="match status" value="1"/>
</dbReference>
<dbReference type="Gene3D" id="3.40.50.2000">
    <property type="entry name" value="Glycogen Phosphorylase B"/>
    <property type="match status" value="2"/>
</dbReference>
<dbReference type="HAMAP" id="MF_00033">
    <property type="entry name" value="MurG"/>
    <property type="match status" value="1"/>
</dbReference>
<dbReference type="InterPro" id="IPR006009">
    <property type="entry name" value="GlcNAc_MurG"/>
</dbReference>
<dbReference type="InterPro" id="IPR007235">
    <property type="entry name" value="Glyco_trans_28_C"/>
</dbReference>
<dbReference type="InterPro" id="IPR004276">
    <property type="entry name" value="GlycoTrans_28_N"/>
</dbReference>
<dbReference type="NCBIfam" id="TIGR01133">
    <property type="entry name" value="murG"/>
    <property type="match status" value="1"/>
</dbReference>
<dbReference type="PANTHER" id="PTHR21015:SF22">
    <property type="entry name" value="GLYCOSYLTRANSFERASE"/>
    <property type="match status" value="1"/>
</dbReference>
<dbReference type="PANTHER" id="PTHR21015">
    <property type="entry name" value="UDP-N-ACETYLGLUCOSAMINE--N-ACETYLMURAMYL-(PENTAPEPTIDE) PYROPHOSPHORYL-UNDECAPRENOL N-ACETYLGLUCOSAMINE TRANSFERASE 1"/>
    <property type="match status" value="1"/>
</dbReference>
<dbReference type="Pfam" id="PF04101">
    <property type="entry name" value="Glyco_tran_28_C"/>
    <property type="match status" value="1"/>
</dbReference>
<dbReference type="Pfam" id="PF03033">
    <property type="entry name" value="Glyco_transf_28"/>
    <property type="match status" value="1"/>
</dbReference>
<dbReference type="SUPFAM" id="SSF53756">
    <property type="entry name" value="UDP-Glycosyltransferase/glycogen phosphorylase"/>
    <property type="match status" value="1"/>
</dbReference>
<evidence type="ECO:0000255" key="1">
    <source>
        <dbReference type="HAMAP-Rule" id="MF_00033"/>
    </source>
</evidence>
<comment type="function">
    <text evidence="1">Cell wall formation. Catalyzes the transfer of a GlcNAc subunit on undecaprenyl-pyrophosphoryl-MurNAc-pentapeptide (lipid intermediate I) to form undecaprenyl-pyrophosphoryl-MurNAc-(pentapeptide)GlcNAc (lipid intermediate II).</text>
</comment>
<comment type="catalytic activity">
    <reaction evidence="1">
        <text>di-trans,octa-cis-undecaprenyl diphospho-N-acetyl-alpha-D-muramoyl-L-alanyl-D-glutamyl-meso-2,6-diaminopimeloyl-D-alanyl-D-alanine + UDP-N-acetyl-alpha-D-glucosamine = di-trans,octa-cis-undecaprenyl diphospho-[N-acetyl-alpha-D-glucosaminyl-(1-&gt;4)]-N-acetyl-alpha-D-muramoyl-L-alanyl-D-glutamyl-meso-2,6-diaminopimeloyl-D-alanyl-D-alanine + UDP + H(+)</text>
        <dbReference type="Rhea" id="RHEA:31227"/>
        <dbReference type="ChEBI" id="CHEBI:15378"/>
        <dbReference type="ChEBI" id="CHEBI:57705"/>
        <dbReference type="ChEBI" id="CHEBI:58223"/>
        <dbReference type="ChEBI" id="CHEBI:61387"/>
        <dbReference type="ChEBI" id="CHEBI:61388"/>
        <dbReference type="EC" id="2.4.1.227"/>
    </reaction>
</comment>
<comment type="pathway">
    <text evidence="1">Cell wall biogenesis; peptidoglycan biosynthesis.</text>
</comment>
<comment type="subcellular location">
    <subcellularLocation>
        <location evidence="1">Cell inner membrane</location>
        <topology evidence="1">Peripheral membrane protein</topology>
        <orientation evidence="1">Cytoplasmic side</orientation>
    </subcellularLocation>
</comment>
<comment type="similarity">
    <text evidence="1">Belongs to the glycosyltransferase 28 family. MurG subfamily.</text>
</comment>
<organism>
    <name type="scientific">Prochlorococcus marinus (strain MIT 9303)</name>
    <dbReference type="NCBI Taxonomy" id="59922"/>
    <lineage>
        <taxon>Bacteria</taxon>
        <taxon>Bacillati</taxon>
        <taxon>Cyanobacteriota</taxon>
        <taxon>Cyanophyceae</taxon>
        <taxon>Synechococcales</taxon>
        <taxon>Prochlorococcaceae</taxon>
        <taxon>Prochlorococcus</taxon>
    </lineage>
</organism>
<feature type="chain" id="PRO_0000315139" description="UDP-N-acetylglucosamine--N-acetylmuramyl-(pentapeptide) pyrophosphoryl-undecaprenol N-acetylglucosamine transferase">
    <location>
        <begin position="1"/>
        <end position="361"/>
    </location>
</feature>
<feature type="binding site" evidence="1">
    <location>
        <begin position="11"/>
        <end position="13"/>
    </location>
    <ligand>
        <name>UDP-N-acetyl-alpha-D-glucosamine</name>
        <dbReference type="ChEBI" id="CHEBI:57705"/>
    </ligand>
</feature>
<feature type="binding site" evidence="1">
    <location>
        <position position="120"/>
    </location>
    <ligand>
        <name>UDP-N-acetyl-alpha-D-glucosamine</name>
        <dbReference type="ChEBI" id="CHEBI:57705"/>
    </ligand>
</feature>
<feature type="binding site" evidence="1">
    <location>
        <position position="161"/>
    </location>
    <ligand>
        <name>UDP-N-acetyl-alpha-D-glucosamine</name>
        <dbReference type="ChEBI" id="CHEBI:57705"/>
    </ligand>
</feature>
<feature type="binding site" evidence="1">
    <location>
        <position position="188"/>
    </location>
    <ligand>
        <name>UDP-N-acetyl-alpha-D-glucosamine</name>
        <dbReference type="ChEBI" id="CHEBI:57705"/>
    </ligand>
</feature>
<feature type="binding site" evidence="1">
    <location>
        <position position="282"/>
    </location>
    <ligand>
        <name>UDP-N-acetyl-alpha-D-glucosamine</name>
        <dbReference type="ChEBI" id="CHEBI:57705"/>
    </ligand>
</feature>
<keyword id="KW-0131">Cell cycle</keyword>
<keyword id="KW-0132">Cell division</keyword>
<keyword id="KW-0997">Cell inner membrane</keyword>
<keyword id="KW-1003">Cell membrane</keyword>
<keyword id="KW-0133">Cell shape</keyword>
<keyword id="KW-0961">Cell wall biogenesis/degradation</keyword>
<keyword id="KW-0328">Glycosyltransferase</keyword>
<keyword id="KW-0472">Membrane</keyword>
<keyword id="KW-0573">Peptidoglycan synthesis</keyword>
<keyword id="KW-0808">Transferase</keyword>
<protein>
    <recommendedName>
        <fullName evidence="1">UDP-N-acetylglucosamine--N-acetylmuramyl-(pentapeptide) pyrophosphoryl-undecaprenol N-acetylglucosamine transferase</fullName>
        <ecNumber evidence="1">2.4.1.227</ecNumber>
    </recommendedName>
    <alternativeName>
        <fullName evidence="1">Undecaprenyl-PP-MurNAc-pentapeptide-UDPGlcNAc GlcNAc transferase</fullName>
    </alternativeName>
</protein>
<gene>
    <name evidence="1" type="primary">murG</name>
    <name type="ordered locus">P9303_27911</name>
</gene>
<sequence>MPRLLIAASGTGGHLFPALAVAESLPASWSVCWLGVPDRLETQLVPERYELTTVRAGGLQGRGLRKLVQLLQLLAATGRVRKLLRKQGIQTVFTTGGYIAAPAILAARWCGIPVVLHESNAIPGRVTRLLGRFCQVVAVGLSVAAKRIPGSKAVVTGTPVRSAFLSPQPLPHWVPCGDGPLLVVIGGSQGAVGLNRMVRGALPSLLEAGCRVVHLTGNNDPDVGELDHPNLVEQPFSHEMPGLLQHADLAISRAGAGSLSELAVCGTPTILVPFPQAADQHQEANAACAAALGAAVIVHQHAAEHRALGHALEQLMGARLRGNAAASNPLIPMKQGMMKLAVREADQLLVTLLKPLIGAGL</sequence>
<reference key="1">
    <citation type="journal article" date="2007" name="PLoS Genet.">
        <title>Patterns and implications of gene gain and loss in the evolution of Prochlorococcus.</title>
        <authorList>
            <person name="Kettler G.C."/>
            <person name="Martiny A.C."/>
            <person name="Huang K."/>
            <person name="Zucker J."/>
            <person name="Coleman M.L."/>
            <person name="Rodrigue S."/>
            <person name="Chen F."/>
            <person name="Lapidus A."/>
            <person name="Ferriera S."/>
            <person name="Johnson J."/>
            <person name="Steglich C."/>
            <person name="Church G.M."/>
            <person name="Richardson P."/>
            <person name="Chisholm S.W."/>
        </authorList>
    </citation>
    <scope>NUCLEOTIDE SEQUENCE [LARGE SCALE GENOMIC DNA]</scope>
    <source>
        <strain>MIT 9303</strain>
    </source>
</reference>
<accession>A2CDG1</accession>